<evidence type="ECO:0000255" key="1">
    <source>
        <dbReference type="HAMAP-Rule" id="MF_01317"/>
    </source>
</evidence>
<evidence type="ECO:0000312" key="2">
    <source>
        <dbReference type="Proteomes" id="UP000006591"/>
    </source>
</evidence>
<reference key="1">
    <citation type="journal article" date="2004" name="Gene">
        <title>The complete nucleotide sequence of wild rice (Oryza nivara) chloroplast genome: first genome wide comparative sequence analysis of wild and cultivated rice.</title>
        <authorList>
            <person name="Masood M.S."/>
            <person name="Nishikawa T."/>
            <person name="Fukuoka S."/>
            <person name="Njenga P.K."/>
            <person name="Tsudzuki T."/>
            <person name="Kadowaki K."/>
        </authorList>
    </citation>
    <scope>NUCLEOTIDE SEQUENCE [LARGE SCALE GENOMIC DNA]</scope>
    <source>
        <strain evidence="2">cv. SL10</strain>
    </source>
</reference>
<keyword id="KW-0150">Chloroplast</keyword>
<keyword id="KW-0472">Membrane</keyword>
<keyword id="KW-0602">Photosynthesis</keyword>
<keyword id="KW-0604">Photosystem II</keyword>
<keyword id="KW-0934">Plastid</keyword>
<keyword id="KW-0674">Reaction center</keyword>
<keyword id="KW-1185">Reference proteome</keyword>
<keyword id="KW-0793">Thylakoid</keyword>
<keyword id="KW-0812">Transmembrane</keyword>
<keyword id="KW-1133">Transmembrane helix</keyword>
<sequence length="38" mass="4497">MTQSNPNEQNVELNRTSLYWGLLLIFVLAVLFSNYFFN</sequence>
<organism>
    <name type="scientific">Oryza nivara</name>
    <name type="common">Indian wild rice</name>
    <name type="synonym">Oryza sativa f. spontanea</name>
    <dbReference type="NCBI Taxonomy" id="4536"/>
    <lineage>
        <taxon>Eukaryota</taxon>
        <taxon>Viridiplantae</taxon>
        <taxon>Streptophyta</taxon>
        <taxon>Embryophyta</taxon>
        <taxon>Tracheophyta</taxon>
        <taxon>Spermatophyta</taxon>
        <taxon>Magnoliopsida</taxon>
        <taxon>Liliopsida</taxon>
        <taxon>Poales</taxon>
        <taxon>Poaceae</taxon>
        <taxon>BOP clade</taxon>
        <taxon>Oryzoideae</taxon>
        <taxon>Oryzeae</taxon>
        <taxon>Oryzinae</taxon>
        <taxon>Oryza</taxon>
    </lineage>
</organism>
<geneLocation type="chloroplast"/>
<protein>
    <recommendedName>
        <fullName evidence="1">Photosystem II reaction center protein L</fullName>
        <shortName evidence="1">PSII-L</shortName>
    </recommendedName>
</protein>
<dbReference type="EMBL" id="AP006728">
    <property type="protein sequence ID" value="BAD26794.1"/>
    <property type="molecule type" value="Genomic_DNA"/>
</dbReference>
<dbReference type="RefSeq" id="YP_052765.1">
    <property type="nucleotide sequence ID" value="NC_005973.1"/>
</dbReference>
<dbReference type="SMR" id="Q6ENF8"/>
<dbReference type="STRING" id="4536.Q6ENF8"/>
<dbReference type="GeneID" id="2885918"/>
<dbReference type="Proteomes" id="UP000006591">
    <property type="component" value="Chloroplast"/>
</dbReference>
<dbReference type="GO" id="GO:0009535">
    <property type="term" value="C:chloroplast thylakoid membrane"/>
    <property type="evidence" value="ECO:0007669"/>
    <property type="project" value="UniProtKB-SubCell"/>
</dbReference>
<dbReference type="GO" id="GO:0009539">
    <property type="term" value="C:photosystem II reaction center"/>
    <property type="evidence" value="ECO:0007669"/>
    <property type="project" value="InterPro"/>
</dbReference>
<dbReference type="GO" id="GO:0009536">
    <property type="term" value="C:plastid"/>
    <property type="evidence" value="ECO:0000305"/>
    <property type="project" value="Gramene"/>
</dbReference>
<dbReference type="GO" id="GO:0015979">
    <property type="term" value="P:photosynthesis"/>
    <property type="evidence" value="ECO:0007669"/>
    <property type="project" value="UniProtKB-UniRule"/>
</dbReference>
<dbReference type="HAMAP" id="MF_01317">
    <property type="entry name" value="PSII_PsbL"/>
    <property type="match status" value="1"/>
</dbReference>
<dbReference type="InterPro" id="IPR003372">
    <property type="entry name" value="PSII_PsbL"/>
</dbReference>
<dbReference type="InterPro" id="IPR037266">
    <property type="entry name" value="PSII_PsbL_sf"/>
</dbReference>
<dbReference type="NCBIfam" id="NF001972">
    <property type="entry name" value="PRK00753.1"/>
    <property type="match status" value="1"/>
</dbReference>
<dbReference type="Pfam" id="PF02419">
    <property type="entry name" value="PsbL"/>
    <property type="match status" value="1"/>
</dbReference>
<dbReference type="SUPFAM" id="SSF161017">
    <property type="entry name" value="Photosystem II reaction center protein L, PsbL"/>
    <property type="match status" value="1"/>
</dbReference>
<comment type="function">
    <text evidence="1">One of the components of the core complex of photosystem II (PSII). PSII is a light-driven water:plastoquinone oxidoreductase that uses light energy to abstract electrons from H(2)O, generating O(2) and a proton gradient subsequently used for ATP formation. It consists of a core antenna complex that captures photons, and an electron transfer chain that converts photonic excitation into a charge separation. This subunit is found at the monomer-monomer interface and is required for correct PSII assembly and/or dimerization.</text>
</comment>
<comment type="subunit">
    <text evidence="1">PSII is composed of 1 copy each of membrane proteins PsbA, PsbB, PsbC, PsbD, PsbE, PsbF, PsbH, PsbI, PsbJ, PsbK, PsbL, PsbM, PsbT, PsbX, PsbY, PsbZ, Psb30/Ycf12, at least 3 peripheral proteins of the oxygen-evolving complex and a large number of cofactors. It forms dimeric complexes.</text>
</comment>
<comment type="subcellular location">
    <subcellularLocation>
        <location evidence="1">Plastid</location>
        <location evidence="1">Chloroplast thylakoid membrane</location>
        <topology evidence="1">Single-pass membrane protein</topology>
    </subcellularLocation>
</comment>
<comment type="similarity">
    <text evidence="1">Belongs to the PsbL family.</text>
</comment>
<proteinExistence type="inferred from homology"/>
<accession>Q6ENF8</accession>
<gene>
    <name evidence="1" type="primary">psbL</name>
</gene>
<feature type="chain" id="PRO_0000219753" description="Photosystem II reaction center protein L">
    <location>
        <begin position="1"/>
        <end position="38"/>
    </location>
</feature>
<feature type="transmembrane region" description="Helical" evidence="1">
    <location>
        <begin position="17"/>
        <end position="37"/>
    </location>
</feature>
<name>PSBL_ORYNI</name>